<comment type="catalytic activity">
    <reaction evidence="1">
        <text>beta-D-fructose 1,6-bisphosphate + H2O = beta-D-fructose 6-phosphate + phosphate</text>
        <dbReference type="Rhea" id="RHEA:11064"/>
        <dbReference type="ChEBI" id="CHEBI:15377"/>
        <dbReference type="ChEBI" id="CHEBI:32966"/>
        <dbReference type="ChEBI" id="CHEBI:43474"/>
        <dbReference type="ChEBI" id="CHEBI:57634"/>
        <dbReference type="EC" id="3.1.3.11"/>
    </reaction>
</comment>
<comment type="cofactor">
    <cofactor evidence="1">
        <name>Mg(2+)</name>
        <dbReference type="ChEBI" id="CHEBI:18420"/>
    </cofactor>
    <text evidence="1">Binds 2 magnesium ions per subunit.</text>
</comment>
<comment type="pathway">
    <text evidence="1">Carbohydrate biosynthesis; Calvin cycle.</text>
</comment>
<comment type="subunit">
    <text evidence="1">Homotetramer.</text>
</comment>
<comment type="subcellular location">
    <subcellularLocation>
        <location evidence="1">Cytoplasm</location>
    </subcellularLocation>
</comment>
<comment type="similarity">
    <text evidence="1">Belongs to the FBPase class 1 family.</text>
</comment>
<organism>
    <name type="scientific">Synechocystis sp. (strain ATCC 27184 / PCC 6803 / Kazusa)</name>
    <dbReference type="NCBI Taxonomy" id="1111708"/>
    <lineage>
        <taxon>Bacteria</taxon>
        <taxon>Bacillati</taxon>
        <taxon>Cyanobacteriota</taxon>
        <taxon>Cyanophyceae</taxon>
        <taxon>Synechococcales</taxon>
        <taxon>Merismopediaceae</taxon>
        <taxon>Synechocystis</taxon>
    </lineage>
</organism>
<reference key="1">
    <citation type="journal article" date="1996" name="DNA Res.">
        <title>Sequence analysis of the genome of the unicellular cyanobacterium Synechocystis sp. strain PCC6803. II. Sequence determination of the entire genome and assignment of potential protein-coding regions.</title>
        <authorList>
            <person name="Kaneko T."/>
            <person name="Sato S."/>
            <person name="Kotani H."/>
            <person name="Tanaka A."/>
            <person name="Asamizu E."/>
            <person name="Nakamura Y."/>
            <person name="Miyajima N."/>
            <person name="Hirosawa M."/>
            <person name="Sugiura M."/>
            <person name="Sasamoto S."/>
            <person name="Kimura T."/>
            <person name="Hosouchi T."/>
            <person name="Matsuno A."/>
            <person name="Muraki A."/>
            <person name="Nakazaki N."/>
            <person name="Naruo K."/>
            <person name="Okumura S."/>
            <person name="Shimpo S."/>
            <person name="Takeuchi C."/>
            <person name="Wada T."/>
            <person name="Watanabe A."/>
            <person name="Yamada M."/>
            <person name="Yasuda M."/>
            <person name="Tabata S."/>
        </authorList>
    </citation>
    <scope>NUCLEOTIDE SEQUENCE [LARGE SCALE GENOMIC DNA]</scope>
    <source>
        <strain>ATCC 27184 / PCC 6803 / Kazusa</strain>
    </source>
</reference>
<dbReference type="EC" id="3.1.3.11" evidence="1"/>
<dbReference type="EMBL" id="BA000022">
    <property type="protein sequence ID" value="BAA18418.1"/>
    <property type="molecule type" value="Genomic_DNA"/>
</dbReference>
<dbReference type="PIR" id="S76159">
    <property type="entry name" value="S76159"/>
</dbReference>
<dbReference type="SMR" id="P74324"/>
<dbReference type="STRING" id="1148.gene:10499294"/>
<dbReference type="PaxDb" id="1148-1653505"/>
<dbReference type="EnsemblBacteria" id="BAA18418">
    <property type="protein sequence ID" value="BAA18418"/>
    <property type="gene ID" value="BAA18418"/>
</dbReference>
<dbReference type="KEGG" id="syn:slr0952"/>
<dbReference type="eggNOG" id="COG0158">
    <property type="taxonomic scope" value="Bacteria"/>
</dbReference>
<dbReference type="InParanoid" id="P74324"/>
<dbReference type="PhylomeDB" id="P74324"/>
<dbReference type="BioCyc" id="MetaCyc:FBPSYN-MONOMER"/>
<dbReference type="UniPathway" id="UPA00116"/>
<dbReference type="Proteomes" id="UP000001425">
    <property type="component" value="Chromosome"/>
</dbReference>
<dbReference type="GO" id="GO:0005737">
    <property type="term" value="C:cytoplasm"/>
    <property type="evidence" value="ECO:0000318"/>
    <property type="project" value="GO_Central"/>
</dbReference>
<dbReference type="GO" id="GO:0005829">
    <property type="term" value="C:cytosol"/>
    <property type="evidence" value="ECO:0000318"/>
    <property type="project" value="GO_Central"/>
</dbReference>
<dbReference type="GO" id="GO:0042132">
    <property type="term" value="F:fructose 1,6-bisphosphate 1-phosphatase activity"/>
    <property type="evidence" value="ECO:0000318"/>
    <property type="project" value="GO_Central"/>
</dbReference>
<dbReference type="GO" id="GO:0000287">
    <property type="term" value="F:magnesium ion binding"/>
    <property type="evidence" value="ECO:0007669"/>
    <property type="project" value="UniProtKB-UniRule"/>
</dbReference>
<dbReference type="GO" id="GO:0030388">
    <property type="term" value="P:fructose 1,6-bisphosphate metabolic process"/>
    <property type="evidence" value="ECO:0000318"/>
    <property type="project" value="GO_Central"/>
</dbReference>
<dbReference type="GO" id="GO:0006002">
    <property type="term" value="P:fructose 6-phosphate metabolic process"/>
    <property type="evidence" value="ECO:0000318"/>
    <property type="project" value="GO_Central"/>
</dbReference>
<dbReference type="GO" id="GO:0006000">
    <property type="term" value="P:fructose metabolic process"/>
    <property type="evidence" value="ECO:0000318"/>
    <property type="project" value="GO_Central"/>
</dbReference>
<dbReference type="GO" id="GO:0006094">
    <property type="term" value="P:gluconeogenesis"/>
    <property type="evidence" value="ECO:0000318"/>
    <property type="project" value="GO_Central"/>
</dbReference>
<dbReference type="GO" id="GO:0019253">
    <property type="term" value="P:reductive pentose-phosphate cycle"/>
    <property type="evidence" value="ECO:0007669"/>
    <property type="project" value="UniProtKB-UniRule"/>
</dbReference>
<dbReference type="CDD" id="cd00354">
    <property type="entry name" value="FBPase"/>
    <property type="match status" value="1"/>
</dbReference>
<dbReference type="FunFam" id="3.30.540.10:FF:000002">
    <property type="entry name" value="Fructose-1,6-bisphosphatase class 1"/>
    <property type="match status" value="1"/>
</dbReference>
<dbReference type="Gene3D" id="3.40.190.80">
    <property type="match status" value="1"/>
</dbReference>
<dbReference type="Gene3D" id="3.30.540.10">
    <property type="entry name" value="Fructose-1,6-Bisphosphatase, subunit A, domain 1"/>
    <property type="match status" value="1"/>
</dbReference>
<dbReference type="HAMAP" id="MF_01855">
    <property type="entry name" value="FBPase_class1"/>
    <property type="match status" value="1"/>
</dbReference>
<dbReference type="InterPro" id="IPR044015">
    <property type="entry name" value="FBPase_C_dom"/>
</dbReference>
<dbReference type="InterPro" id="IPR000146">
    <property type="entry name" value="FBPase_class-1"/>
</dbReference>
<dbReference type="InterPro" id="IPR033391">
    <property type="entry name" value="FBPase_N"/>
</dbReference>
<dbReference type="InterPro" id="IPR028343">
    <property type="entry name" value="FBPtase"/>
</dbReference>
<dbReference type="InterPro" id="IPR020548">
    <property type="entry name" value="Fructose_bisphosphatase_AS"/>
</dbReference>
<dbReference type="NCBIfam" id="NF006778">
    <property type="entry name" value="PRK09293.1-1"/>
    <property type="match status" value="1"/>
</dbReference>
<dbReference type="PANTHER" id="PTHR11556">
    <property type="entry name" value="FRUCTOSE-1,6-BISPHOSPHATASE-RELATED"/>
    <property type="match status" value="1"/>
</dbReference>
<dbReference type="PANTHER" id="PTHR11556:SF35">
    <property type="entry name" value="SEDOHEPTULOSE-1,7-BISPHOSPHATASE, CHLOROPLASTIC"/>
    <property type="match status" value="1"/>
</dbReference>
<dbReference type="Pfam" id="PF00316">
    <property type="entry name" value="FBPase"/>
    <property type="match status" value="1"/>
</dbReference>
<dbReference type="Pfam" id="PF18913">
    <property type="entry name" value="FBPase_C"/>
    <property type="match status" value="1"/>
</dbReference>
<dbReference type="PIRSF" id="PIRSF500210">
    <property type="entry name" value="FBPtase"/>
    <property type="match status" value="1"/>
</dbReference>
<dbReference type="PIRSF" id="PIRSF000904">
    <property type="entry name" value="FBPtase_SBPase"/>
    <property type="match status" value="1"/>
</dbReference>
<dbReference type="PRINTS" id="PR00115">
    <property type="entry name" value="F16BPHPHTASE"/>
</dbReference>
<dbReference type="SUPFAM" id="SSF56655">
    <property type="entry name" value="Carbohydrate phosphatase"/>
    <property type="match status" value="1"/>
</dbReference>
<dbReference type="PROSITE" id="PS00124">
    <property type="entry name" value="FBPASE"/>
    <property type="match status" value="1"/>
</dbReference>
<sequence>MTVSEIHIPNSLLDRDCTTLSRHVLQQLNSFGADAQDLSAIMNRIALAGKLIARRLSRAGLMADVLGFTGETNVQGESVKKMDVFANDVFISVFKQSGLVCRLASEEMEKPYYIPENCPIGRYTLLYDPIDGSSNVDINLNVGSIFAIRQQEGDDLDGSASDLLANGDKQIAAGYILYGPSTILVYSLGSGVHSFILDPSLGEFILAQENIRIPNHGPIYSTNEGNFWQWDEALRDYTRYVHRHEGYTARYSGALVGDIHRILMQGGVFLYPGTEKNPDGKLRLLYETAPLAFLVEQAGGRASDGQKRLLDLIPSKLHQRTPAIIGSAEDVKLVESFISDHKQRQGN</sequence>
<feature type="chain" id="PRO_0000200490" description="Fructose-1,6-bisphosphatase class 1">
    <location>
        <begin position="1"/>
        <end position="347"/>
    </location>
</feature>
<feature type="binding site" evidence="1">
    <location>
        <position position="106"/>
    </location>
    <ligand>
        <name>Mg(2+)</name>
        <dbReference type="ChEBI" id="CHEBI:18420"/>
        <label>1</label>
    </ligand>
</feature>
<feature type="binding site" evidence="1">
    <location>
        <position position="128"/>
    </location>
    <ligand>
        <name>Mg(2+)</name>
        <dbReference type="ChEBI" id="CHEBI:18420"/>
        <label>1</label>
    </ligand>
</feature>
<feature type="binding site" evidence="1">
    <location>
        <position position="128"/>
    </location>
    <ligand>
        <name>Mg(2+)</name>
        <dbReference type="ChEBI" id="CHEBI:18420"/>
        <label>2</label>
    </ligand>
</feature>
<feature type="binding site" evidence="1">
    <location>
        <position position="130"/>
    </location>
    <ligand>
        <name>Mg(2+)</name>
        <dbReference type="ChEBI" id="CHEBI:18420"/>
        <label>1</label>
    </ligand>
</feature>
<feature type="binding site" evidence="1">
    <location>
        <begin position="131"/>
        <end position="134"/>
    </location>
    <ligand>
        <name>substrate</name>
    </ligand>
</feature>
<feature type="binding site" evidence="1">
    <location>
        <position position="131"/>
    </location>
    <ligand>
        <name>Mg(2+)</name>
        <dbReference type="ChEBI" id="CHEBI:18420"/>
        <label>2</label>
    </ligand>
</feature>
<feature type="binding site" evidence="1">
    <location>
        <position position="223"/>
    </location>
    <ligand>
        <name>substrate</name>
    </ligand>
</feature>
<feature type="binding site" evidence="1">
    <location>
        <position position="251"/>
    </location>
    <ligand>
        <name>substrate</name>
    </ligand>
</feature>
<feature type="binding site" evidence="1">
    <location>
        <position position="281"/>
    </location>
    <ligand>
        <name>substrate</name>
    </ligand>
</feature>
<feature type="binding site" evidence="1">
    <location>
        <position position="287"/>
    </location>
    <ligand>
        <name>Mg(2+)</name>
        <dbReference type="ChEBI" id="CHEBI:18420"/>
        <label>2</label>
    </ligand>
</feature>
<evidence type="ECO:0000255" key="1">
    <source>
        <dbReference type="HAMAP-Rule" id="MF_01855"/>
    </source>
</evidence>
<gene>
    <name evidence="1" type="primary">fbp</name>
    <name type="ordered locus">slr0952</name>
</gene>
<keyword id="KW-0113">Calvin cycle</keyword>
<keyword id="KW-0119">Carbohydrate metabolism</keyword>
<keyword id="KW-0963">Cytoplasm</keyword>
<keyword id="KW-0378">Hydrolase</keyword>
<keyword id="KW-0460">Magnesium</keyword>
<keyword id="KW-0479">Metal-binding</keyword>
<keyword id="KW-1185">Reference proteome</keyword>
<name>F16PA_SYNY3</name>
<protein>
    <recommendedName>
        <fullName evidence="1">Fructose-1,6-bisphosphatase class 1</fullName>
        <shortName evidence="1">FBPase class 1</shortName>
        <ecNumber evidence="1">3.1.3.11</ecNumber>
    </recommendedName>
    <alternativeName>
        <fullName evidence="1">D-fructose-1,6-bisphosphate 1-phosphohydrolase class 1</fullName>
    </alternativeName>
</protein>
<proteinExistence type="inferred from homology"/>
<accession>P74324</accession>